<reference key="1">
    <citation type="submission" date="2005-03" db="EMBL/GenBank/DDBJ databases">
        <title>Comparison of the complete genome sequences of Rhodococcus erythropolis PR4 and Rhodococcus opacus B4.</title>
        <authorList>
            <person name="Takarada H."/>
            <person name="Sekine M."/>
            <person name="Hosoyama A."/>
            <person name="Yamada R."/>
            <person name="Fujisawa T."/>
            <person name="Omata S."/>
            <person name="Shimizu A."/>
            <person name="Tsukatani N."/>
            <person name="Tanikawa S."/>
            <person name="Fujita N."/>
            <person name="Harayama S."/>
        </authorList>
    </citation>
    <scope>NUCLEOTIDE SEQUENCE [LARGE SCALE GENOMIC DNA]</scope>
    <source>
        <strain>PR4 / NBRC 100887</strain>
    </source>
</reference>
<comment type="function">
    <text evidence="2">Involved in base excision repair of DNA damaged by oxidation or by mutagenic agents. Acts as a DNA glycosylase that recognizes and removes damaged bases. Has a preference for oxidized purines, such as 7,8-dihydro-8-oxoguanine (8-oxoG). Has AP (apurinic/apyrimidinic) lyase activity and introduces nicks in the DNA strand. Cleaves the DNA backbone by beta-delta elimination to generate a single-strand break at the site of the removed base with both 3'- and 5'-phosphates.</text>
</comment>
<comment type="catalytic activity">
    <reaction evidence="2">
        <text>Hydrolysis of DNA containing ring-opened 7-methylguanine residues, releasing 2,6-diamino-4-hydroxy-5-(N-methyl)formamidopyrimidine.</text>
        <dbReference type="EC" id="3.2.2.23"/>
    </reaction>
</comment>
<comment type="catalytic activity">
    <reaction evidence="2">
        <text>2'-deoxyribonucleotide-(2'-deoxyribose 5'-phosphate)-2'-deoxyribonucleotide-DNA = a 3'-end 2'-deoxyribonucleotide-(2,3-dehydro-2,3-deoxyribose 5'-phosphate)-DNA + a 5'-end 5'-phospho-2'-deoxyribonucleoside-DNA + H(+)</text>
        <dbReference type="Rhea" id="RHEA:66592"/>
        <dbReference type="Rhea" id="RHEA-COMP:13180"/>
        <dbReference type="Rhea" id="RHEA-COMP:16897"/>
        <dbReference type="Rhea" id="RHEA-COMP:17067"/>
        <dbReference type="ChEBI" id="CHEBI:15378"/>
        <dbReference type="ChEBI" id="CHEBI:136412"/>
        <dbReference type="ChEBI" id="CHEBI:157695"/>
        <dbReference type="ChEBI" id="CHEBI:167181"/>
        <dbReference type="EC" id="4.2.99.18"/>
    </reaction>
</comment>
<comment type="cofactor">
    <cofactor evidence="2">
        <name>Zn(2+)</name>
        <dbReference type="ChEBI" id="CHEBI:29105"/>
    </cofactor>
    <text evidence="2">Binds 1 zinc ion per subunit.</text>
</comment>
<comment type="subunit">
    <text evidence="2">Monomer.</text>
</comment>
<comment type="similarity">
    <text evidence="2">Belongs to the FPG family.</text>
</comment>
<organism>
    <name type="scientific">Rhodococcus erythropolis (strain PR4 / NBRC 100887)</name>
    <dbReference type="NCBI Taxonomy" id="234621"/>
    <lineage>
        <taxon>Bacteria</taxon>
        <taxon>Bacillati</taxon>
        <taxon>Actinomycetota</taxon>
        <taxon>Actinomycetes</taxon>
        <taxon>Mycobacteriales</taxon>
        <taxon>Nocardiaceae</taxon>
        <taxon>Rhodococcus</taxon>
        <taxon>Rhodococcus erythropolis group</taxon>
    </lineage>
</organism>
<accession>C0ZXQ5</accession>
<protein>
    <recommendedName>
        <fullName evidence="2">Formamidopyrimidine-DNA glycosylase</fullName>
        <shortName evidence="2">Fapy-DNA glycosylase</shortName>
        <ecNumber evidence="2">3.2.2.23</ecNumber>
    </recommendedName>
    <alternativeName>
        <fullName evidence="2">DNA-(apurinic or apyrimidinic site) lyase MutM</fullName>
        <shortName evidence="2">AP lyase MutM</shortName>
        <ecNumber evidence="2">4.2.99.18</ecNumber>
    </alternativeName>
</protein>
<proteinExistence type="inferred from homology"/>
<keyword id="KW-0227">DNA damage</keyword>
<keyword id="KW-0234">DNA repair</keyword>
<keyword id="KW-0238">DNA-binding</keyword>
<keyword id="KW-0326">Glycosidase</keyword>
<keyword id="KW-0378">Hydrolase</keyword>
<keyword id="KW-0456">Lyase</keyword>
<keyword id="KW-0479">Metal-binding</keyword>
<keyword id="KW-0511">Multifunctional enzyme</keyword>
<keyword id="KW-0862">Zinc</keyword>
<keyword id="KW-0863">Zinc-finger</keyword>
<name>FPG_RHOE4</name>
<sequence>MPELPEVEVVRRGLQSHAVGAAIEAVEVLHPRAIRRHILGSEDLIGQLTGQTIASAERRGKYLWLVLEPAGVGLVVHLGMSGQMLVQPPTVDWEKHLRIRLALDSGADLRFVDQRTFGGWSISPLVEVDGTMLPESVAHIARDPMDAAFDLESVVKVLRGKHTEIKRAILDQTVVSGIGNIYADESLWRAKIHGNRIAESLTRPKLRELLTAAHSVMGEALDQGGTSFDALYVNVNGESGYFDRSLSAYGQENLPCPRCGAPIKREKFMNRSSFSCPRCQPTPRARRIA</sequence>
<evidence type="ECO:0000250" key="1"/>
<evidence type="ECO:0000255" key="2">
    <source>
        <dbReference type="HAMAP-Rule" id="MF_00103"/>
    </source>
</evidence>
<gene>
    <name evidence="2" type="primary">mutM</name>
    <name evidence="2" type="synonym">fpg</name>
    <name type="ordered locus">RER_24320</name>
</gene>
<feature type="initiator methionine" description="Removed" evidence="1">
    <location>
        <position position="1"/>
    </location>
</feature>
<feature type="chain" id="PRO_1000202828" description="Formamidopyrimidine-DNA glycosylase">
    <location>
        <begin position="2"/>
        <end position="289"/>
    </location>
</feature>
<feature type="zinc finger region" description="FPG-type" evidence="2">
    <location>
        <begin position="247"/>
        <end position="281"/>
    </location>
</feature>
<feature type="active site" description="Schiff-base intermediate with DNA" evidence="2">
    <location>
        <position position="2"/>
    </location>
</feature>
<feature type="active site" description="Proton donor" evidence="2">
    <location>
        <position position="3"/>
    </location>
</feature>
<feature type="active site" description="Proton donor; for beta-elimination activity" evidence="2">
    <location>
        <position position="61"/>
    </location>
</feature>
<feature type="active site" description="Proton donor; for delta-elimination activity" evidence="2">
    <location>
        <position position="271"/>
    </location>
</feature>
<feature type="binding site" evidence="2">
    <location>
        <position position="96"/>
    </location>
    <ligand>
        <name>DNA</name>
        <dbReference type="ChEBI" id="CHEBI:16991"/>
    </ligand>
</feature>
<feature type="binding site" evidence="2">
    <location>
        <position position="115"/>
    </location>
    <ligand>
        <name>DNA</name>
        <dbReference type="ChEBI" id="CHEBI:16991"/>
    </ligand>
</feature>
<feature type="binding site" evidence="2">
    <location>
        <position position="161"/>
    </location>
    <ligand>
        <name>DNA</name>
        <dbReference type="ChEBI" id="CHEBI:16991"/>
    </ligand>
</feature>
<dbReference type="EC" id="3.2.2.23" evidence="2"/>
<dbReference type="EC" id="4.2.99.18" evidence="2"/>
<dbReference type="EMBL" id="AP008957">
    <property type="protein sequence ID" value="BAH33140.1"/>
    <property type="molecule type" value="Genomic_DNA"/>
</dbReference>
<dbReference type="RefSeq" id="WP_019747953.1">
    <property type="nucleotide sequence ID" value="NC_012490.1"/>
</dbReference>
<dbReference type="SMR" id="C0ZXQ5"/>
<dbReference type="GeneID" id="57487518"/>
<dbReference type="KEGG" id="rer:RER_24320"/>
<dbReference type="eggNOG" id="COG0266">
    <property type="taxonomic scope" value="Bacteria"/>
</dbReference>
<dbReference type="HOGENOM" id="CLU_038423_1_2_11"/>
<dbReference type="Proteomes" id="UP000002204">
    <property type="component" value="Chromosome"/>
</dbReference>
<dbReference type="GO" id="GO:0034039">
    <property type="term" value="F:8-oxo-7,8-dihydroguanine DNA N-glycosylase activity"/>
    <property type="evidence" value="ECO:0007669"/>
    <property type="project" value="TreeGrafter"/>
</dbReference>
<dbReference type="GO" id="GO:0140078">
    <property type="term" value="F:class I DNA-(apurinic or apyrimidinic site) endonuclease activity"/>
    <property type="evidence" value="ECO:0007669"/>
    <property type="project" value="UniProtKB-EC"/>
</dbReference>
<dbReference type="GO" id="GO:0003684">
    <property type="term" value="F:damaged DNA binding"/>
    <property type="evidence" value="ECO:0007669"/>
    <property type="project" value="InterPro"/>
</dbReference>
<dbReference type="GO" id="GO:0008270">
    <property type="term" value="F:zinc ion binding"/>
    <property type="evidence" value="ECO:0007669"/>
    <property type="project" value="UniProtKB-UniRule"/>
</dbReference>
<dbReference type="GO" id="GO:0006284">
    <property type="term" value="P:base-excision repair"/>
    <property type="evidence" value="ECO:0007669"/>
    <property type="project" value="InterPro"/>
</dbReference>
<dbReference type="CDD" id="cd08966">
    <property type="entry name" value="EcFpg-like_N"/>
    <property type="match status" value="1"/>
</dbReference>
<dbReference type="FunFam" id="1.10.8.50:FF:000003">
    <property type="entry name" value="Formamidopyrimidine-DNA glycosylase"/>
    <property type="match status" value="1"/>
</dbReference>
<dbReference type="Gene3D" id="1.10.8.50">
    <property type="match status" value="1"/>
</dbReference>
<dbReference type="Gene3D" id="3.20.190.10">
    <property type="entry name" value="MutM-like, N-terminal"/>
    <property type="match status" value="1"/>
</dbReference>
<dbReference type="HAMAP" id="MF_00103">
    <property type="entry name" value="Fapy_DNA_glycosyl"/>
    <property type="match status" value="1"/>
</dbReference>
<dbReference type="InterPro" id="IPR015886">
    <property type="entry name" value="DNA_glyclase/AP_lyase_DNA-bd"/>
</dbReference>
<dbReference type="InterPro" id="IPR020629">
    <property type="entry name" value="Formamido-pyr_DNA_Glyclase"/>
</dbReference>
<dbReference type="InterPro" id="IPR012319">
    <property type="entry name" value="FPG_cat"/>
</dbReference>
<dbReference type="InterPro" id="IPR035937">
    <property type="entry name" value="MutM-like_N-ter"/>
</dbReference>
<dbReference type="InterPro" id="IPR010979">
    <property type="entry name" value="Ribosomal_uS13-like_H2TH"/>
</dbReference>
<dbReference type="InterPro" id="IPR000214">
    <property type="entry name" value="Znf_DNA_glyclase/AP_lyase"/>
</dbReference>
<dbReference type="InterPro" id="IPR010663">
    <property type="entry name" value="Znf_FPG/IleRS"/>
</dbReference>
<dbReference type="NCBIfam" id="TIGR00577">
    <property type="entry name" value="fpg"/>
    <property type="match status" value="1"/>
</dbReference>
<dbReference type="NCBIfam" id="NF002211">
    <property type="entry name" value="PRK01103.1"/>
    <property type="match status" value="1"/>
</dbReference>
<dbReference type="PANTHER" id="PTHR22993">
    <property type="entry name" value="FORMAMIDOPYRIMIDINE-DNA GLYCOSYLASE"/>
    <property type="match status" value="1"/>
</dbReference>
<dbReference type="PANTHER" id="PTHR22993:SF9">
    <property type="entry name" value="FORMAMIDOPYRIMIDINE-DNA GLYCOSYLASE"/>
    <property type="match status" value="1"/>
</dbReference>
<dbReference type="Pfam" id="PF01149">
    <property type="entry name" value="Fapy_DNA_glyco"/>
    <property type="match status" value="1"/>
</dbReference>
<dbReference type="Pfam" id="PF06831">
    <property type="entry name" value="H2TH"/>
    <property type="match status" value="1"/>
</dbReference>
<dbReference type="Pfam" id="PF06827">
    <property type="entry name" value="zf-FPG_IleRS"/>
    <property type="match status" value="1"/>
</dbReference>
<dbReference type="SMART" id="SM00898">
    <property type="entry name" value="Fapy_DNA_glyco"/>
    <property type="match status" value="1"/>
</dbReference>
<dbReference type="SMART" id="SM01232">
    <property type="entry name" value="H2TH"/>
    <property type="match status" value="1"/>
</dbReference>
<dbReference type="SUPFAM" id="SSF57716">
    <property type="entry name" value="Glucocorticoid receptor-like (DNA-binding domain)"/>
    <property type="match status" value="1"/>
</dbReference>
<dbReference type="SUPFAM" id="SSF81624">
    <property type="entry name" value="N-terminal domain of MutM-like DNA repair proteins"/>
    <property type="match status" value="1"/>
</dbReference>
<dbReference type="SUPFAM" id="SSF46946">
    <property type="entry name" value="S13-like H2TH domain"/>
    <property type="match status" value="1"/>
</dbReference>
<dbReference type="PROSITE" id="PS51068">
    <property type="entry name" value="FPG_CAT"/>
    <property type="match status" value="1"/>
</dbReference>
<dbReference type="PROSITE" id="PS51066">
    <property type="entry name" value="ZF_FPG_2"/>
    <property type="match status" value="1"/>
</dbReference>